<gene>
    <name evidence="1" type="primary">rpsG</name>
    <name type="ordered locus">FTL_0233</name>
</gene>
<evidence type="ECO:0000255" key="1">
    <source>
        <dbReference type="HAMAP-Rule" id="MF_00480"/>
    </source>
</evidence>
<evidence type="ECO:0000305" key="2"/>
<accession>Q2A5H3</accession>
<comment type="function">
    <text evidence="1">One of the primary rRNA binding proteins, it binds directly to 16S rRNA where it nucleates assembly of the head domain of the 30S subunit. Is located at the subunit interface close to the decoding center, probably blocks exit of the E-site tRNA.</text>
</comment>
<comment type="subunit">
    <text evidence="1">Part of the 30S ribosomal subunit. Contacts proteins S9 and S11.</text>
</comment>
<comment type="similarity">
    <text evidence="1">Belongs to the universal ribosomal protein uS7 family.</text>
</comment>
<name>RS7_FRATH</name>
<keyword id="KW-1185">Reference proteome</keyword>
<keyword id="KW-0687">Ribonucleoprotein</keyword>
<keyword id="KW-0689">Ribosomal protein</keyword>
<keyword id="KW-0694">RNA-binding</keyword>
<keyword id="KW-0699">rRNA-binding</keyword>
<keyword id="KW-0820">tRNA-binding</keyword>
<organism>
    <name type="scientific">Francisella tularensis subsp. holarctica (strain LVS)</name>
    <dbReference type="NCBI Taxonomy" id="376619"/>
    <lineage>
        <taxon>Bacteria</taxon>
        <taxon>Pseudomonadati</taxon>
        <taxon>Pseudomonadota</taxon>
        <taxon>Gammaproteobacteria</taxon>
        <taxon>Thiotrichales</taxon>
        <taxon>Francisellaceae</taxon>
        <taxon>Francisella</taxon>
    </lineage>
</organism>
<proteinExistence type="inferred from homology"/>
<feature type="chain" id="PRO_0000241756" description="Small ribosomal subunit protein uS7">
    <location>
        <begin position="1"/>
        <end position="157"/>
    </location>
</feature>
<dbReference type="EMBL" id="AM233362">
    <property type="protein sequence ID" value="CAJ78674.1"/>
    <property type="molecule type" value="Genomic_DNA"/>
</dbReference>
<dbReference type="RefSeq" id="WP_003021606.1">
    <property type="nucleotide sequence ID" value="NZ_CP009694.1"/>
</dbReference>
<dbReference type="SMR" id="Q2A5H3"/>
<dbReference type="GeneID" id="75264264"/>
<dbReference type="KEGG" id="ftl:FTL_0233"/>
<dbReference type="Proteomes" id="UP000001944">
    <property type="component" value="Chromosome"/>
</dbReference>
<dbReference type="GO" id="GO:0015935">
    <property type="term" value="C:small ribosomal subunit"/>
    <property type="evidence" value="ECO:0007669"/>
    <property type="project" value="InterPro"/>
</dbReference>
<dbReference type="GO" id="GO:0019843">
    <property type="term" value="F:rRNA binding"/>
    <property type="evidence" value="ECO:0007669"/>
    <property type="project" value="UniProtKB-UniRule"/>
</dbReference>
<dbReference type="GO" id="GO:0003735">
    <property type="term" value="F:structural constituent of ribosome"/>
    <property type="evidence" value="ECO:0007669"/>
    <property type="project" value="InterPro"/>
</dbReference>
<dbReference type="GO" id="GO:0000049">
    <property type="term" value="F:tRNA binding"/>
    <property type="evidence" value="ECO:0007669"/>
    <property type="project" value="UniProtKB-UniRule"/>
</dbReference>
<dbReference type="GO" id="GO:0006412">
    <property type="term" value="P:translation"/>
    <property type="evidence" value="ECO:0007669"/>
    <property type="project" value="UniProtKB-UniRule"/>
</dbReference>
<dbReference type="CDD" id="cd14869">
    <property type="entry name" value="uS7_Bacteria"/>
    <property type="match status" value="1"/>
</dbReference>
<dbReference type="FunFam" id="1.10.455.10:FF:000001">
    <property type="entry name" value="30S ribosomal protein S7"/>
    <property type="match status" value="1"/>
</dbReference>
<dbReference type="Gene3D" id="1.10.455.10">
    <property type="entry name" value="Ribosomal protein S7 domain"/>
    <property type="match status" value="1"/>
</dbReference>
<dbReference type="HAMAP" id="MF_00480_B">
    <property type="entry name" value="Ribosomal_uS7_B"/>
    <property type="match status" value="1"/>
</dbReference>
<dbReference type="InterPro" id="IPR000235">
    <property type="entry name" value="Ribosomal_uS7"/>
</dbReference>
<dbReference type="InterPro" id="IPR005717">
    <property type="entry name" value="Ribosomal_uS7_bac/org-type"/>
</dbReference>
<dbReference type="InterPro" id="IPR020606">
    <property type="entry name" value="Ribosomal_uS7_CS"/>
</dbReference>
<dbReference type="InterPro" id="IPR023798">
    <property type="entry name" value="Ribosomal_uS7_dom"/>
</dbReference>
<dbReference type="InterPro" id="IPR036823">
    <property type="entry name" value="Ribosomal_uS7_dom_sf"/>
</dbReference>
<dbReference type="NCBIfam" id="TIGR01029">
    <property type="entry name" value="rpsG_bact"/>
    <property type="match status" value="1"/>
</dbReference>
<dbReference type="PANTHER" id="PTHR11205">
    <property type="entry name" value="RIBOSOMAL PROTEIN S7"/>
    <property type="match status" value="1"/>
</dbReference>
<dbReference type="Pfam" id="PF00177">
    <property type="entry name" value="Ribosomal_S7"/>
    <property type="match status" value="1"/>
</dbReference>
<dbReference type="PIRSF" id="PIRSF002122">
    <property type="entry name" value="RPS7p_RPS7a_RPS5e_RPS7o"/>
    <property type="match status" value="1"/>
</dbReference>
<dbReference type="SUPFAM" id="SSF47973">
    <property type="entry name" value="Ribosomal protein S7"/>
    <property type="match status" value="1"/>
</dbReference>
<dbReference type="PROSITE" id="PS00052">
    <property type="entry name" value="RIBOSOMAL_S7"/>
    <property type="match status" value="1"/>
</dbReference>
<reference key="1">
    <citation type="submission" date="2006-03" db="EMBL/GenBank/DDBJ databases">
        <title>Complete genome sequence of Francisella tularensis LVS (Live Vaccine Strain).</title>
        <authorList>
            <person name="Chain P."/>
            <person name="Larimer F."/>
            <person name="Land M."/>
            <person name="Stilwagen S."/>
            <person name="Larsson P."/>
            <person name="Bearden S."/>
            <person name="Chu M."/>
            <person name="Oyston P."/>
            <person name="Forsman M."/>
            <person name="Andersson S."/>
            <person name="Lindler L."/>
            <person name="Titball R."/>
            <person name="Garcia E."/>
        </authorList>
    </citation>
    <scope>NUCLEOTIDE SEQUENCE [LARGE SCALE GENOMIC DNA]</scope>
    <source>
        <strain>LVS</strain>
    </source>
</reference>
<protein>
    <recommendedName>
        <fullName evidence="1">Small ribosomal subunit protein uS7</fullName>
    </recommendedName>
    <alternativeName>
        <fullName evidence="2">30S ribosomal protein S7</fullName>
    </alternativeName>
</protein>
<sequence length="157" mass="17808">MSRRNRAPKRDILPDPKYKSQVVAKFVNHIMLSGKKSIAEKIVYGAFDKIKAKDASANEVEVFEKALESVSPMVEVKSRRVGGATYQVPVEVRPERRQTLGMRWIIDAARKRKENTMGDRVAAEILEAVEGRGAAVKKREDTHKMAEANKAFAHFRW</sequence>